<evidence type="ECO:0000269" key="1">
    <source>
    </source>
</evidence>
<evidence type="ECO:0000269" key="2">
    <source>
    </source>
</evidence>
<evidence type="ECO:0000269" key="3">
    <source>
    </source>
</evidence>
<evidence type="ECO:0000269" key="4">
    <source>
    </source>
</evidence>
<evidence type="ECO:0000269" key="5">
    <source>
    </source>
</evidence>
<evidence type="ECO:0000269" key="6">
    <source>
    </source>
</evidence>
<evidence type="ECO:0000269" key="7">
    <source>
    </source>
</evidence>
<evidence type="ECO:0000269" key="8">
    <source>
    </source>
</evidence>
<evidence type="ECO:0000269" key="9">
    <source ref="3"/>
</evidence>
<evidence type="ECO:0000303" key="10">
    <source>
    </source>
</evidence>
<evidence type="ECO:0000303" key="11">
    <source>
    </source>
</evidence>
<evidence type="ECO:0000305" key="12"/>
<evidence type="ECO:0000305" key="13">
    <source>
    </source>
</evidence>
<evidence type="ECO:0000312" key="14">
    <source>
        <dbReference type="SGD" id="S000004722"/>
    </source>
</evidence>
<evidence type="ECO:0007744" key="15">
    <source>
    </source>
</evidence>
<evidence type="ECO:0007744" key="16">
    <source>
    </source>
</evidence>
<evidence type="ECO:0007744" key="17">
    <source>
    </source>
</evidence>
<evidence type="ECO:0007744" key="18">
    <source>
    </source>
</evidence>
<evidence type="ECO:0007829" key="19">
    <source>
        <dbReference type="PDB" id="3FRX"/>
    </source>
</evidence>
<evidence type="ECO:0007829" key="20">
    <source>
        <dbReference type="PDB" id="3RFH"/>
    </source>
</evidence>
<evidence type="ECO:0007829" key="21">
    <source>
        <dbReference type="PDB" id="6ZVI"/>
    </source>
</evidence>
<evidence type="ECO:0007829" key="22">
    <source>
        <dbReference type="PDB" id="7A1G"/>
    </source>
</evidence>
<evidence type="ECO:0007829" key="23">
    <source>
        <dbReference type="PDB" id="8CAS"/>
    </source>
</evidence>
<reference key="1">
    <citation type="journal article" date="1997" name="Nature">
        <title>The nucleotide sequence of Saccharomyces cerevisiae chromosome XIII.</title>
        <authorList>
            <person name="Bowman S."/>
            <person name="Churcher C.M."/>
            <person name="Badcock K."/>
            <person name="Brown D."/>
            <person name="Chillingworth T."/>
            <person name="Connor R."/>
            <person name="Dedman K."/>
            <person name="Devlin K."/>
            <person name="Gentles S."/>
            <person name="Hamlin N."/>
            <person name="Hunt S."/>
            <person name="Jagels K."/>
            <person name="Lye G."/>
            <person name="Moule S."/>
            <person name="Odell C."/>
            <person name="Pearson D."/>
            <person name="Rajandream M.A."/>
            <person name="Rice P."/>
            <person name="Skelton J."/>
            <person name="Walsh S.V."/>
            <person name="Whitehead S."/>
            <person name="Barrell B.G."/>
        </authorList>
    </citation>
    <scope>NUCLEOTIDE SEQUENCE [LARGE SCALE GENOMIC DNA]</scope>
    <source>
        <strain>ATCC 204508 / S288c</strain>
    </source>
</reference>
<reference key="2">
    <citation type="journal article" date="2014" name="G3 (Bethesda)">
        <title>The reference genome sequence of Saccharomyces cerevisiae: Then and now.</title>
        <authorList>
            <person name="Engel S.R."/>
            <person name="Dietrich F.S."/>
            <person name="Fisk D.G."/>
            <person name="Binkley G."/>
            <person name="Balakrishnan R."/>
            <person name="Costanzo M.C."/>
            <person name="Dwight S.S."/>
            <person name="Hitz B.C."/>
            <person name="Karra K."/>
            <person name="Nash R.S."/>
            <person name="Weng S."/>
            <person name="Wong E.D."/>
            <person name="Lloyd P."/>
            <person name="Skrzypek M.S."/>
            <person name="Miyasato S.R."/>
            <person name="Simison M."/>
            <person name="Cherry J.M."/>
        </authorList>
    </citation>
    <scope>GENOME REANNOTATION</scope>
    <source>
        <strain>ATCC 204508 / S288c</strain>
    </source>
</reference>
<reference key="3">
    <citation type="submission" date="2005-05" db="UniProtKB">
        <authorList>
            <person name="Bienvenut W.V."/>
            <person name="Peters C."/>
        </authorList>
    </citation>
    <scope>PROTEIN SEQUENCE OF 2-10; 47-59; 91-102; 138-155; 217-228 AND 262-311</scope>
    <scope>CLEAVAGE OF INITIATOR METHIONINE</scope>
    <scope>ACETYLATION AT ALA-2</scope>
    <scope>IDENTIFICATION BY MASS SPECTROMETRY</scope>
</reference>
<reference key="4">
    <citation type="journal article" date="1994" name="Electrophoresis">
        <title>Protein identifications for a Saccharomyces cerevisiae protein database.</title>
        <authorList>
            <person name="Garrels J.I."/>
            <person name="Futcher B."/>
            <person name="Kobayashi R."/>
            <person name="Latter G.I."/>
            <person name="Schwender B."/>
            <person name="Volpe T."/>
            <person name="Warner J.R."/>
            <person name="McLaughlin C.S."/>
        </authorList>
    </citation>
    <scope>PROTEIN SEQUENCE OF 54-62</scope>
    <source>
        <strain>ATCC 204508 / S288c</strain>
    </source>
</reference>
<reference key="5">
    <citation type="journal article" date="1997" name="J. Biol. Chem.">
        <title>Metabolic and regulatory changes associated with growth of Saccharomyces cerevisiae in 1.4 M NaCl. Evidence for osmotic induction of glycerol dissimilation via the dihydroxyacetone pathway.</title>
        <authorList>
            <person name="Norbeck J."/>
            <person name="Blomberg A."/>
        </authorList>
    </citation>
    <scope>PROTEIN SEQUENCE OF 63-70 AND 138-149</scope>
    <source>
        <strain>ATCC 44827 / SKQ2N</strain>
    </source>
</reference>
<reference key="6">
    <citation type="journal article" date="2004" name="Biochem. J.">
        <title>Asc1p, a WD40-domain containing adaptor protein, is required for the interaction of the RNA-binding protein Scp160p with polysomes.</title>
        <authorList>
            <person name="Baum S."/>
            <person name="Bittins M."/>
            <person name="Frey S."/>
            <person name="Seedorf M."/>
        </authorList>
    </citation>
    <scope>PROTEIN SEQUENCE OF 91-102; 162-176; 217-228 AND 250-261</scope>
    <scope>INTERACTION WITH SCP160</scope>
    <scope>SUBUNIT</scope>
</reference>
<reference key="7">
    <citation type="journal article" date="2003" name="Nature">
        <title>Global analysis of protein expression in yeast.</title>
        <authorList>
            <person name="Ghaemmaghami S."/>
            <person name="Huh W.-K."/>
            <person name="Bower K."/>
            <person name="Howson R.W."/>
            <person name="Belle A."/>
            <person name="Dephoure N."/>
            <person name="O'Shea E.K."/>
            <person name="Weissman J.S."/>
        </authorList>
    </citation>
    <scope>LEVEL OF PROTEIN EXPRESSION [LARGE SCALE ANALYSIS]</scope>
</reference>
<reference key="8">
    <citation type="journal article" date="2004" name="Mol. Cell. Biol.">
        <title>Yeast Asc1p and mammalian RACK1 are functionally orthologous core 40S ribosomal proteins that repress gene expression.</title>
        <authorList>
            <person name="Gerbasi V.R."/>
            <person name="Weaver C.M."/>
            <person name="Hill S."/>
            <person name="Friedman D.B."/>
            <person name="Link A.J."/>
        </authorList>
    </citation>
    <scope>FUNCTION</scope>
    <scope>SUBUNIT</scope>
</reference>
<reference key="9">
    <citation type="journal article" date="2007" name="Proc. Natl. Acad. Sci. U.S.A.">
        <title>Analysis of phosphorylation sites on proteins from Saccharomyces cerevisiae by electron transfer dissociation (ETD) mass spectrometry.</title>
        <authorList>
            <person name="Chi A."/>
            <person name="Huttenhower C."/>
            <person name="Geer L.Y."/>
            <person name="Coon J.J."/>
            <person name="Syka J.E.P."/>
            <person name="Bai D.L."/>
            <person name="Shabanowitz J."/>
            <person name="Burke D.J."/>
            <person name="Troyanskaya O.G."/>
            <person name="Hunt D.F."/>
        </authorList>
    </citation>
    <scope>PHOSPHORYLATION [LARGE SCALE ANALYSIS] AT THR-96</scope>
    <scope>IDENTIFICATION BY MASS SPECTROMETRY [LARGE SCALE ANALYSIS]</scope>
</reference>
<reference key="10">
    <citation type="journal article" date="2008" name="Mol. Cell. Proteomics">
        <title>A multidimensional chromatography technology for in-depth phosphoproteome analysis.</title>
        <authorList>
            <person name="Albuquerque C.P."/>
            <person name="Smolka M.B."/>
            <person name="Payne S.H."/>
            <person name="Bafna V."/>
            <person name="Eng J."/>
            <person name="Zhou H."/>
        </authorList>
    </citation>
    <scope>IDENTIFICATION BY MASS SPECTROMETRY [LARGE SCALE ANALYSIS]</scope>
</reference>
<reference key="11">
    <citation type="journal article" date="2009" name="Science">
        <title>Global analysis of Cdk1 substrate phosphorylation sites provides insights into evolution.</title>
        <authorList>
            <person name="Holt L.J."/>
            <person name="Tuch B.B."/>
            <person name="Villen J."/>
            <person name="Johnson A.D."/>
            <person name="Gygi S.P."/>
            <person name="Morgan D.O."/>
        </authorList>
    </citation>
    <scope>PHOSPHORYLATION [LARGE SCALE ANALYSIS] AT THR-168</scope>
    <scope>IDENTIFICATION BY MASS SPECTROMETRY [LARGE SCALE ANALYSIS]</scope>
</reference>
<reference key="12">
    <citation type="journal article" date="2012" name="Proc. Natl. Acad. Sci. U.S.A.">
        <title>N-terminal acetylome analyses and functional insights of the N-terminal acetyltransferase NatB.</title>
        <authorList>
            <person name="Van Damme P."/>
            <person name="Lasa M."/>
            <person name="Polevoda B."/>
            <person name="Gazquez C."/>
            <person name="Elosegui-Artola A."/>
            <person name="Kim D.S."/>
            <person name="De Juan-Pardo E."/>
            <person name="Demeyer K."/>
            <person name="Hole K."/>
            <person name="Larrea E."/>
            <person name="Timmerman E."/>
            <person name="Prieto J."/>
            <person name="Arnesen T."/>
            <person name="Sherman F."/>
            <person name="Gevaert K."/>
            <person name="Aldabe R."/>
        </authorList>
    </citation>
    <scope>ACETYLATION [LARGE SCALE ANALYSIS] AT ALA-2</scope>
    <scope>CLEAVAGE OF INITIATOR METHIONINE [LARGE SCALE ANALYSIS]</scope>
    <scope>IDENTIFICATION BY MASS SPECTROMETRY [LARGE SCALE ANALYSIS]</scope>
</reference>
<reference key="13">
    <citation type="journal article" date="2012" name="Proteomics">
        <title>Sites of ubiquitin attachment in Saccharomyces cerevisiae.</title>
        <authorList>
            <person name="Starita L.M."/>
            <person name="Lo R.S."/>
            <person name="Eng J.K."/>
            <person name="von Haller P.D."/>
            <person name="Fields S."/>
        </authorList>
    </citation>
    <scope>UBIQUITINATION [LARGE SCALE ANALYSIS] AT LYS-46; LYS-53; LYS-107; LYS-137 AND LYS-161</scope>
    <scope>IDENTIFICATION BY MASS SPECTROMETRY [LARGE SCALE ANALYSIS]</scope>
</reference>
<reference key="14">
    <citation type="journal article" date="2014" name="Curr. Opin. Struct. Biol.">
        <title>A new system for naming ribosomal proteins.</title>
        <authorList>
            <person name="Ban N."/>
            <person name="Beckmann R."/>
            <person name="Cate J.H.D."/>
            <person name="Dinman J.D."/>
            <person name="Dragon F."/>
            <person name="Ellis S.R."/>
            <person name="Lafontaine D.L.J."/>
            <person name="Lindahl L."/>
            <person name="Liljas A."/>
            <person name="Lipton J.M."/>
            <person name="McAlear M.A."/>
            <person name="Moore P.B."/>
            <person name="Noller H.F."/>
            <person name="Ortega J."/>
            <person name="Panse V.G."/>
            <person name="Ramakrishnan V."/>
            <person name="Spahn C.M.T."/>
            <person name="Steitz T.A."/>
            <person name="Tchorzewski M."/>
            <person name="Tollervey D."/>
            <person name="Warren A.J."/>
            <person name="Williamson J.R."/>
            <person name="Wilson D."/>
            <person name="Yonath A."/>
            <person name="Yusupov M."/>
        </authorList>
    </citation>
    <scope>NOMENCLATURE</scope>
</reference>
<reference key="15">
    <citation type="journal article" date="2017" name="RNA">
        <title>Asc1, Hel2, and Slh1 couple translation arrest to nascent chain degradation.</title>
        <authorList>
            <person name="Sitron C.S."/>
            <person name="Park J.H."/>
            <person name="Brandman O."/>
        </authorList>
    </citation>
    <scope>FUNCTION</scope>
    <scope>DISRUPTION PHENOTYPE</scope>
</reference>
<reference key="16">
    <citation type="journal article" date="2018" name="Elife">
        <title>Multi-protein bridging factor 1(Mbf1), Rps3 and Asc1 prevent stalled ribosomes from frameshifting.</title>
        <authorList>
            <person name="Wang J."/>
            <person name="Zhou J."/>
            <person name="Yang Q."/>
            <person name="Grayhack E.J."/>
        </authorList>
    </citation>
    <scope>FUNCTION</scope>
</reference>
<reference key="17">
    <citation type="journal article" date="2004" name="Nat. Struct. Mol. Biol.">
        <title>Identification of the versatile scaffold protein RACK1 on the eukaryotic ribosome by cryo-EM.</title>
        <authorList>
            <person name="Sengupta J."/>
            <person name="Nilsson J."/>
            <person name="Gursky R."/>
            <person name="Spahn C.M."/>
            <person name="Nissen P."/>
            <person name="Frank J."/>
        </authorList>
    </citation>
    <scope>3D-STRUCTURE MODELING OF 1-114</scope>
    <scope>ELECTRON MICROSCOPY</scope>
    <scope>SUBUNIT</scope>
</reference>
<reference key="18">
    <citation type="journal article" date="2010" name="Science">
        <title>Crystal structure of the eukaryotic ribosome.</title>
        <authorList>
            <person name="Ben-Shem A."/>
            <person name="Jenner L."/>
            <person name="Yusupova G."/>
            <person name="Yusupov M."/>
        </authorList>
    </citation>
    <scope>X-RAY CRYSTALLOGRAPHY (4.00 ANGSTROMS) OF 80S RIBOSOME</scope>
</reference>
<reference key="19">
    <citation type="journal article" date="2011" name="J. Mol. Biol.">
        <title>Structure of the RACK1 dimer from Saccharomyces cerevisiae.</title>
        <authorList>
            <person name="Yatime L."/>
            <person name="Hein K.L."/>
            <person name="Nilsson J."/>
            <person name="Nissen P."/>
        </authorList>
    </citation>
    <scope>X-RAY CRYSTALLOGRAPHY (2.90 ANGSTROMS)</scope>
    <scope>SUBUNIT</scope>
</reference>
<reference key="20">
    <citation type="journal article" date="2011" name="Science">
        <title>The structure of the eukaryotic ribosome at 3.0 A resolution.</title>
        <authorList>
            <person name="Ben-Shem A."/>
            <person name="Garreau de Loubresse N."/>
            <person name="Melnikov S."/>
            <person name="Jenner L."/>
            <person name="Yusupova G."/>
            <person name="Yusupov M."/>
        </authorList>
    </citation>
    <scope>X-RAY CRYSTALLOGRAPHY (3.00 ANGSTROMS) OF 80S RIBOSOME</scope>
    <scope>SUBUNIT</scope>
    <scope>SUBCELLULAR LOCATION</scope>
</reference>
<sequence>MASNEVLVLRGTLEGHNGWVTSLATSAGQPNLLLSASRDKTLISWKLTGDDQKFGVPVRSFKGHSHIVQDCTLTADGAYALSASWDKTLRLWDVATGETYQRFVGHKSDVMSVDIDKKASMIISGSRDKTIKVWTIKGQCLATLLGHNDWVSQVRVVPNEKADDDSVTIISAGNDKMVKAWNLNQFQIEADFIGHNSNINTLTASPDGTLIASAGKDGEIMLWNLAAKKAMYTLSAQDEVFSLAFSPNRYWLAAATATGIKVFSLDPQYLVDDLRPEFAGYSKAAEPHAVSLAWSADGQTLFAGYTDNVIRVWQVMTAN</sequence>
<keyword id="KW-0002">3D-structure</keyword>
<keyword id="KW-0007">Acetylation</keyword>
<keyword id="KW-0963">Cytoplasm</keyword>
<keyword id="KW-0903">Direct protein sequencing</keyword>
<keyword id="KW-1017">Isopeptide bond</keyword>
<keyword id="KW-0597">Phosphoprotein</keyword>
<keyword id="KW-1185">Reference proteome</keyword>
<keyword id="KW-0677">Repeat</keyword>
<keyword id="KW-0687">Ribonucleoprotein</keyword>
<keyword id="KW-0689">Ribosomal protein</keyword>
<keyword id="KW-0832">Ubl conjugation</keyword>
<keyword id="KW-0853">WD repeat</keyword>
<dbReference type="EMBL" id="Z49702">
    <property type="protein sequence ID" value="CAA89753.1"/>
    <property type="status" value="ALT_SEQ"/>
    <property type="molecule type" value="Genomic_DNA"/>
</dbReference>
<dbReference type="EMBL" id="Z49702">
    <property type="protein sequence ID" value="CAA89754.1"/>
    <property type="molecule type" value="Genomic_DNA"/>
</dbReference>
<dbReference type="EMBL" id="BK006946">
    <property type="protein sequence ID" value="DAA10013.1"/>
    <property type="molecule type" value="Genomic_DNA"/>
</dbReference>
<dbReference type="PIR" id="S54578">
    <property type="entry name" value="S54578"/>
</dbReference>
<dbReference type="RefSeq" id="NP_013834.1">
    <property type="nucleotide sequence ID" value="NM_001182616.1"/>
</dbReference>
<dbReference type="PDB" id="1TRJ">
    <property type="method" value="EM"/>
    <property type="resolution" value="11.70 A"/>
    <property type="chains" value="A=1-314"/>
</dbReference>
<dbReference type="PDB" id="3FRX">
    <property type="method" value="X-ray"/>
    <property type="resolution" value="2.13 A"/>
    <property type="chains" value="A/B/C/D=1-319"/>
</dbReference>
<dbReference type="PDB" id="3J6X">
    <property type="method" value="EM"/>
    <property type="resolution" value="6.10 A"/>
    <property type="chains" value="RA=1-319"/>
</dbReference>
<dbReference type="PDB" id="3J6Y">
    <property type="method" value="EM"/>
    <property type="resolution" value="6.10 A"/>
    <property type="chains" value="RA=1-319"/>
</dbReference>
<dbReference type="PDB" id="3J77">
    <property type="method" value="EM"/>
    <property type="resolution" value="6.20 A"/>
    <property type="chains" value="RC=1-319"/>
</dbReference>
<dbReference type="PDB" id="3J78">
    <property type="method" value="EM"/>
    <property type="resolution" value="6.30 A"/>
    <property type="chains" value="RC=1-319"/>
</dbReference>
<dbReference type="PDB" id="3RFG">
    <property type="method" value="X-ray"/>
    <property type="resolution" value="3.90 A"/>
    <property type="chains" value="A/B=2-319"/>
</dbReference>
<dbReference type="PDB" id="3RFH">
    <property type="method" value="X-ray"/>
    <property type="resolution" value="2.90 A"/>
    <property type="chains" value="A/B/C/D=2-319"/>
</dbReference>
<dbReference type="PDB" id="4U3M">
    <property type="method" value="X-ray"/>
    <property type="resolution" value="3.00 A"/>
    <property type="chains" value="SR/sR=2-319"/>
</dbReference>
<dbReference type="PDB" id="4U3N">
    <property type="method" value="X-ray"/>
    <property type="resolution" value="3.20 A"/>
    <property type="chains" value="SR/sR=2-319"/>
</dbReference>
<dbReference type="PDB" id="4U3U">
    <property type="method" value="X-ray"/>
    <property type="resolution" value="2.90 A"/>
    <property type="chains" value="SR/sR=2-319"/>
</dbReference>
<dbReference type="PDB" id="4U4N">
    <property type="method" value="X-ray"/>
    <property type="resolution" value="3.10 A"/>
    <property type="chains" value="SR/sR=2-319"/>
</dbReference>
<dbReference type="PDB" id="4U4O">
    <property type="method" value="X-ray"/>
    <property type="resolution" value="3.60 A"/>
    <property type="chains" value="SR/sR=2-319"/>
</dbReference>
<dbReference type="PDB" id="4U4Q">
    <property type="method" value="X-ray"/>
    <property type="resolution" value="3.00 A"/>
    <property type="chains" value="SR/sR=2-319"/>
</dbReference>
<dbReference type="PDB" id="4U4R">
    <property type="method" value="X-ray"/>
    <property type="resolution" value="2.80 A"/>
    <property type="chains" value="SR/sR=2-319"/>
</dbReference>
<dbReference type="PDB" id="4U4U">
    <property type="method" value="X-ray"/>
    <property type="resolution" value="3.00 A"/>
    <property type="chains" value="SR/sR=2-319"/>
</dbReference>
<dbReference type="PDB" id="4U4Y">
    <property type="method" value="X-ray"/>
    <property type="resolution" value="3.20 A"/>
    <property type="chains" value="SR/sR=2-319"/>
</dbReference>
<dbReference type="PDB" id="4U4Z">
    <property type="method" value="X-ray"/>
    <property type="resolution" value="3.10 A"/>
    <property type="chains" value="SR/sR=2-319"/>
</dbReference>
<dbReference type="PDB" id="4U50">
    <property type="method" value="X-ray"/>
    <property type="resolution" value="3.20 A"/>
    <property type="chains" value="SR/sR=2-319"/>
</dbReference>
<dbReference type="PDB" id="4U51">
    <property type="method" value="X-ray"/>
    <property type="resolution" value="3.20 A"/>
    <property type="chains" value="SR/sR=2-319"/>
</dbReference>
<dbReference type="PDB" id="4U52">
    <property type="method" value="X-ray"/>
    <property type="resolution" value="3.00 A"/>
    <property type="chains" value="SR/sR=2-319"/>
</dbReference>
<dbReference type="PDB" id="4U53">
    <property type="method" value="X-ray"/>
    <property type="resolution" value="3.30 A"/>
    <property type="chains" value="SR/sR=2-319"/>
</dbReference>
<dbReference type="PDB" id="4U55">
    <property type="method" value="X-ray"/>
    <property type="resolution" value="3.20 A"/>
    <property type="chains" value="SR/sR=2-319"/>
</dbReference>
<dbReference type="PDB" id="4U56">
    <property type="method" value="X-ray"/>
    <property type="resolution" value="3.45 A"/>
    <property type="chains" value="SR/sR=2-319"/>
</dbReference>
<dbReference type="PDB" id="4U6F">
    <property type="method" value="X-ray"/>
    <property type="resolution" value="3.10 A"/>
    <property type="chains" value="SR/sR=2-319"/>
</dbReference>
<dbReference type="PDB" id="4V6I">
    <property type="method" value="EM"/>
    <property type="resolution" value="8.80 A"/>
    <property type="chains" value="Aa=1-319"/>
</dbReference>
<dbReference type="PDB" id="4V7R">
    <property type="method" value="X-ray"/>
    <property type="resolution" value="4.00 A"/>
    <property type="chains" value="AT/CT=1-319"/>
</dbReference>
<dbReference type="PDB" id="4V88">
    <property type="method" value="X-ray"/>
    <property type="resolution" value="3.00 A"/>
    <property type="chains" value="Ag/Cg=1-319"/>
</dbReference>
<dbReference type="PDB" id="4V8Y">
    <property type="method" value="EM"/>
    <property type="resolution" value="4.30 A"/>
    <property type="chains" value="A6=1-319"/>
</dbReference>
<dbReference type="PDB" id="4V8Z">
    <property type="method" value="EM"/>
    <property type="resolution" value="6.60 A"/>
    <property type="chains" value="A6=1-319"/>
</dbReference>
<dbReference type="PDB" id="4V92">
    <property type="method" value="EM"/>
    <property type="resolution" value="3.70 A"/>
    <property type="chains" value="g=4-318"/>
</dbReference>
<dbReference type="PDB" id="5DAT">
    <property type="method" value="X-ray"/>
    <property type="resolution" value="3.15 A"/>
    <property type="chains" value="SR/sR=2-319"/>
</dbReference>
<dbReference type="PDB" id="5DC3">
    <property type="method" value="X-ray"/>
    <property type="resolution" value="3.25 A"/>
    <property type="chains" value="SR/sR=2-319"/>
</dbReference>
<dbReference type="PDB" id="5DGE">
    <property type="method" value="X-ray"/>
    <property type="resolution" value="3.45 A"/>
    <property type="chains" value="SR/sR=2-319"/>
</dbReference>
<dbReference type="PDB" id="5DGF">
    <property type="method" value="X-ray"/>
    <property type="resolution" value="3.30 A"/>
    <property type="chains" value="SR/sR=2-319"/>
</dbReference>
<dbReference type="PDB" id="5DGV">
    <property type="method" value="X-ray"/>
    <property type="resolution" value="3.10 A"/>
    <property type="chains" value="SR/sR=2-319"/>
</dbReference>
<dbReference type="PDB" id="5FCI">
    <property type="method" value="X-ray"/>
    <property type="resolution" value="3.40 A"/>
    <property type="chains" value="SR/sR=2-319"/>
</dbReference>
<dbReference type="PDB" id="5FCJ">
    <property type="method" value="X-ray"/>
    <property type="resolution" value="3.10 A"/>
    <property type="chains" value="SR/sR=2-319"/>
</dbReference>
<dbReference type="PDB" id="5I4L">
    <property type="method" value="X-ray"/>
    <property type="resolution" value="3.10 A"/>
    <property type="chains" value="SR/sR=2-319"/>
</dbReference>
<dbReference type="PDB" id="5JUO">
    <property type="method" value="EM"/>
    <property type="resolution" value="4.00 A"/>
    <property type="chains" value="WA=1-319"/>
</dbReference>
<dbReference type="PDB" id="5JUP">
    <property type="method" value="EM"/>
    <property type="resolution" value="3.50 A"/>
    <property type="chains" value="WA=1-319"/>
</dbReference>
<dbReference type="PDB" id="5JUS">
    <property type="method" value="EM"/>
    <property type="resolution" value="4.20 A"/>
    <property type="chains" value="WA=1-319"/>
</dbReference>
<dbReference type="PDB" id="5JUT">
    <property type="method" value="EM"/>
    <property type="resolution" value="4.00 A"/>
    <property type="chains" value="WA=1-319"/>
</dbReference>
<dbReference type="PDB" id="5JUU">
    <property type="method" value="EM"/>
    <property type="resolution" value="4.00 A"/>
    <property type="chains" value="WA=1-319"/>
</dbReference>
<dbReference type="PDB" id="5LYB">
    <property type="method" value="X-ray"/>
    <property type="resolution" value="3.25 A"/>
    <property type="chains" value="SR/sR=2-319"/>
</dbReference>
<dbReference type="PDB" id="5M1J">
    <property type="method" value="EM"/>
    <property type="resolution" value="3.30 A"/>
    <property type="chains" value="g2=2-319"/>
</dbReference>
<dbReference type="PDB" id="5MC6">
    <property type="method" value="EM"/>
    <property type="resolution" value="3.80 A"/>
    <property type="chains" value="O=1-319"/>
</dbReference>
<dbReference type="PDB" id="5MEI">
    <property type="method" value="X-ray"/>
    <property type="resolution" value="3.50 A"/>
    <property type="chains" value="h/sR=2-319"/>
</dbReference>
<dbReference type="PDB" id="5NDG">
    <property type="method" value="X-ray"/>
    <property type="resolution" value="3.70 A"/>
    <property type="chains" value="SR/sR=2-319"/>
</dbReference>
<dbReference type="PDB" id="5NDV">
    <property type="method" value="X-ray"/>
    <property type="resolution" value="3.30 A"/>
    <property type="chains" value="SR/sR=2-319"/>
</dbReference>
<dbReference type="PDB" id="5NDW">
    <property type="method" value="X-ray"/>
    <property type="resolution" value="3.70 A"/>
    <property type="chains" value="SR/sR=2-319"/>
</dbReference>
<dbReference type="PDB" id="5OBM">
    <property type="method" value="X-ray"/>
    <property type="resolution" value="3.40 A"/>
    <property type="chains" value="SR/sR=2-319"/>
</dbReference>
<dbReference type="PDB" id="5ON6">
    <property type="method" value="X-ray"/>
    <property type="resolution" value="3.10 A"/>
    <property type="chains" value="h/sR=2-319"/>
</dbReference>
<dbReference type="PDB" id="5TBW">
    <property type="method" value="X-ray"/>
    <property type="resolution" value="3.00 A"/>
    <property type="chains" value="Rb/h=2-319"/>
</dbReference>
<dbReference type="PDB" id="5TGA">
    <property type="method" value="X-ray"/>
    <property type="resolution" value="3.30 A"/>
    <property type="chains" value="SR/sR=2-319"/>
</dbReference>
<dbReference type="PDB" id="5TGM">
    <property type="method" value="X-ray"/>
    <property type="resolution" value="3.50 A"/>
    <property type="chains" value="SR/sR=2-319"/>
</dbReference>
<dbReference type="PDB" id="6FAI">
    <property type="method" value="EM"/>
    <property type="resolution" value="3.40 A"/>
    <property type="chains" value="g=1-319"/>
</dbReference>
<dbReference type="PDB" id="6GQ1">
    <property type="method" value="EM"/>
    <property type="resolution" value="4.40 A"/>
    <property type="chains" value="AV=2-319"/>
</dbReference>
<dbReference type="PDB" id="6GQB">
    <property type="method" value="EM"/>
    <property type="resolution" value="3.90 A"/>
    <property type="chains" value="AV=2-319"/>
</dbReference>
<dbReference type="PDB" id="6GQV">
    <property type="method" value="EM"/>
    <property type="resolution" value="4.00 A"/>
    <property type="chains" value="AV=2-319"/>
</dbReference>
<dbReference type="PDB" id="6HHQ">
    <property type="method" value="X-ray"/>
    <property type="resolution" value="3.10 A"/>
    <property type="chains" value="Rb/h=1-319"/>
</dbReference>
<dbReference type="PDB" id="6I7O">
    <property type="method" value="EM"/>
    <property type="resolution" value="5.30 A"/>
    <property type="chains" value="O/Ob=7-319"/>
</dbReference>
<dbReference type="PDB" id="6Q8Y">
    <property type="method" value="EM"/>
    <property type="resolution" value="3.10 A"/>
    <property type="chains" value="O=2-319"/>
</dbReference>
<dbReference type="PDB" id="6RBE">
    <property type="method" value="EM"/>
    <property type="resolution" value="3.80 A"/>
    <property type="chains" value="g=1-319"/>
</dbReference>
<dbReference type="PDB" id="6S47">
    <property type="method" value="EM"/>
    <property type="resolution" value="3.28 A"/>
    <property type="chains" value="Bh=2-319"/>
</dbReference>
<dbReference type="PDB" id="6SNT">
    <property type="method" value="EM"/>
    <property type="resolution" value="2.80 A"/>
    <property type="chains" value="g=1-319"/>
</dbReference>
<dbReference type="PDB" id="6SV4">
    <property type="method" value="EM"/>
    <property type="resolution" value="3.30 A"/>
    <property type="chains" value="O/Ob/Oc=1-319"/>
</dbReference>
<dbReference type="PDB" id="6T4Q">
    <property type="method" value="EM"/>
    <property type="resolution" value="2.60 A"/>
    <property type="chains" value="Sg=5-316"/>
</dbReference>
<dbReference type="PDB" id="6T7I">
    <property type="method" value="EM"/>
    <property type="resolution" value="3.20 A"/>
    <property type="chains" value="Sg=1-319"/>
</dbReference>
<dbReference type="PDB" id="6T7T">
    <property type="method" value="EM"/>
    <property type="resolution" value="3.10 A"/>
    <property type="chains" value="Sg=1-319"/>
</dbReference>
<dbReference type="PDB" id="6T83">
    <property type="method" value="EM"/>
    <property type="resolution" value="4.00 A"/>
    <property type="chains" value="7/gb=1-319"/>
</dbReference>
<dbReference type="PDB" id="6TB3">
    <property type="method" value="EM"/>
    <property type="resolution" value="2.80 A"/>
    <property type="chains" value="O=5-316"/>
</dbReference>
<dbReference type="PDB" id="6TNU">
    <property type="method" value="EM"/>
    <property type="resolution" value="3.10 A"/>
    <property type="chains" value="O=5-316"/>
</dbReference>
<dbReference type="PDB" id="6WDR">
    <property type="method" value="EM"/>
    <property type="resolution" value="3.70 A"/>
    <property type="chains" value="g=3-319"/>
</dbReference>
<dbReference type="PDB" id="6WOO">
    <property type="method" value="EM"/>
    <property type="resolution" value="2.90 A"/>
    <property type="chains" value="gg=2-319"/>
</dbReference>
<dbReference type="PDB" id="6XIQ">
    <property type="method" value="EM"/>
    <property type="resolution" value="4.20 A"/>
    <property type="chains" value="AV=1-319"/>
</dbReference>
<dbReference type="PDB" id="6XIR">
    <property type="method" value="EM"/>
    <property type="resolution" value="3.20 A"/>
    <property type="chains" value="AV=1-319"/>
</dbReference>
<dbReference type="PDB" id="6Z6J">
    <property type="method" value="EM"/>
    <property type="resolution" value="3.40 A"/>
    <property type="chains" value="Sg=1-319"/>
</dbReference>
<dbReference type="PDB" id="6Z6K">
    <property type="method" value="EM"/>
    <property type="resolution" value="3.40 A"/>
    <property type="chains" value="Sg=1-319"/>
</dbReference>
<dbReference type="PDB" id="6ZCE">
    <property type="method" value="EM"/>
    <property type="resolution" value="5.30 A"/>
    <property type="chains" value="h=1-319"/>
</dbReference>
<dbReference type="PDB" id="6ZU9">
    <property type="method" value="EM"/>
    <property type="resolution" value="6.20 A"/>
    <property type="chains" value="h=1-319"/>
</dbReference>
<dbReference type="PDB" id="6ZVI">
    <property type="method" value="EM"/>
    <property type="resolution" value="3.00 A"/>
    <property type="chains" value="R=7-319"/>
</dbReference>
<dbReference type="PDB" id="7A1G">
    <property type="method" value="EM"/>
    <property type="resolution" value="3.00 A"/>
    <property type="chains" value="O=5-316"/>
</dbReference>
<dbReference type="PDB" id="7B7D">
    <property type="method" value="EM"/>
    <property type="resolution" value="3.30 A"/>
    <property type="chains" value="O=5-316"/>
</dbReference>
<dbReference type="PDB" id="7MPI">
    <property type="method" value="EM"/>
    <property type="resolution" value="3.05 A"/>
    <property type="chains" value="Bg=5-316"/>
</dbReference>
<dbReference type="PDB" id="7MPJ">
    <property type="method" value="EM"/>
    <property type="resolution" value="2.70 A"/>
    <property type="chains" value="Bg=5-316"/>
</dbReference>
<dbReference type="PDB" id="7N8B">
    <property type="method" value="EM"/>
    <property type="resolution" value="3.05 A"/>
    <property type="chains" value="Bg=5-316"/>
</dbReference>
<dbReference type="PDB" id="7NRC">
    <property type="method" value="EM"/>
    <property type="resolution" value="3.90 A"/>
    <property type="chains" value="SO=5-316"/>
</dbReference>
<dbReference type="PDB" id="7NRD">
    <property type="method" value="EM"/>
    <property type="resolution" value="4.36 A"/>
    <property type="chains" value="SO=7-319"/>
</dbReference>
<dbReference type="PDB" id="7ZPQ">
    <property type="method" value="EM"/>
    <property type="resolution" value="3.47 A"/>
    <property type="chains" value="Ag=5-316"/>
</dbReference>
<dbReference type="PDB" id="7ZRS">
    <property type="method" value="EM"/>
    <property type="resolution" value="4.80 A"/>
    <property type="chains" value="Ag=5-316"/>
</dbReference>
<dbReference type="PDB" id="7ZUW">
    <property type="method" value="EM"/>
    <property type="resolution" value="4.30 A"/>
    <property type="chains" value="Ag=5-316"/>
</dbReference>
<dbReference type="PDB" id="7ZUX">
    <property type="method" value="EM"/>
    <property type="resolution" value="2.50 A"/>
    <property type="chains" value="Dg=5-316"/>
</dbReference>
<dbReference type="PDB" id="7ZW0">
    <property type="method" value="EM"/>
    <property type="resolution" value="2.40 A"/>
    <property type="chains" value="sO=1-319"/>
</dbReference>
<dbReference type="PDB" id="8BN3">
    <property type="method" value="EM"/>
    <property type="resolution" value="2.40 A"/>
    <property type="chains" value="SR=2-319"/>
</dbReference>
<dbReference type="PDB" id="8BQD">
    <property type="method" value="EM"/>
    <property type="resolution" value="3.90 A"/>
    <property type="chains" value="O=5-316"/>
</dbReference>
<dbReference type="PDB" id="8BQX">
    <property type="method" value="EM"/>
    <property type="resolution" value="3.80 A"/>
    <property type="chains" value="O=5-316"/>
</dbReference>
<dbReference type="PDB" id="8CAH">
    <property type="method" value="EM"/>
    <property type="resolution" value="3.00 A"/>
    <property type="chains" value="O=1-319"/>
</dbReference>
<dbReference type="PDB" id="8CAS">
    <property type="method" value="EM"/>
    <property type="resolution" value="3.30 A"/>
    <property type="chains" value="h=1-319"/>
</dbReference>
<dbReference type="PDB" id="8CBJ">
    <property type="method" value="EM"/>
    <property type="resolution" value="3.80 A"/>
    <property type="chains" value="g=1-319"/>
</dbReference>
<dbReference type="PDB" id="8CCS">
    <property type="method" value="EM"/>
    <property type="resolution" value="1.97 A"/>
    <property type="chains" value="7=1-319"/>
</dbReference>
<dbReference type="PDB" id="8CDL">
    <property type="method" value="EM"/>
    <property type="resolution" value="2.72 A"/>
    <property type="chains" value="7=1-319"/>
</dbReference>
<dbReference type="PDB" id="8CDR">
    <property type="method" value="EM"/>
    <property type="resolution" value="2.04 A"/>
    <property type="chains" value="7=1-319"/>
</dbReference>
<dbReference type="PDB" id="8CEH">
    <property type="method" value="EM"/>
    <property type="resolution" value="2.05 A"/>
    <property type="chains" value="7=1-319"/>
</dbReference>
<dbReference type="PDB" id="8CF5">
    <property type="method" value="EM"/>
    <property type="resolution" value="2.71 A"/>
    <property type="chains" value="7=1-319"/>
</dbReference>
<dbReference type="PDB" id="8CG8">
    <property type="method" value="EM"/>
    <property type="resolution" value="2.57 A"/>
    <property type="chains" value="7=1-319"/>
</dbReference>
<dbReference type="PDB" id="8CGN">
    <property type="method" value="EM"/>
    <property type="resolution" value="2.28 A"/>
    <property type="chains" value="7=1-319"/>
</dbReference>
<dbReference type="PDB" id="8CIV">
    <property type="method" value="EM"/>
    <property type="resolution" value="2.47 A"/>
    <property type="chains" value="7=1-319"/>
</dbReference>
<dbReference type="PDB" id="8CKU">
    <property type="method" value="EM"/>
    <property type="resolution" value="3.11 A"/>
    <property type="chains" value="7=1-319"/>
</dbReference>
<dbReference type="PDB" id="8CMJ">
    <property type="method" value="EM"/>
    <property type="resolution" value="3.79 A"/>
    <property type="chains" value="7=1-319"/>
</dbReference>
<dbReference type="PDB" id="8EUB">
    <property type="method" value="EM"/>
    <property type="resolution" value="2.52 A"/>
    <property type="chains" value="Bg=1-319"/>
</dbReference>
<dbReference type="PDB" id="8EVP">
    <property type="method" value="EM"/>
    <property type="resolution" value="2.38 A"/>
    <property type="chains" value="Bg=1-319"/>
</dbReference>
<dbReference type="PDB" id="8EVQ">
    <property type="method" value="EM"/>
    <property type="resolution" value="2.72 A"/>
    <property type="chains" value="Bg=1-319"/>
</dbReference>
<dbReference type="PDB" id="8EVR">
    <property type="method" value="EM"/>
    <property type="resolution" value="2.87 A"/>
    <property type="chains" value="Bg=1-319"/>
</dbReference>
<dbReference type="PDB" id="8EVS">
    <property type="method" value="EM"/>
    <property type="resolution" value="2.62 A"/>
    <property type="chains" value="Bg=1-319"/>
</dbReference>
<dbReference type="PDB" id="8EVT">
    <property type="method" value="EM"/>
    <property type="resolution" value="2.20 A"/>
    <property type="chains" value="Bg=1-319"/>
</dbReference>
<dbReference type="PDB" id="8EWB">
    <property type="method" value="EM"/>
    <property type="resolution" value="2.87 A"/>
    <property type="chains" value="Bg=1-319"/>
</dbReference>
<dbReference type="PDB" id="8EWC">
    <property type="method" value="EM"/>
    <property type="resolution" value="2.45 A"/>
    <property type="chains" value="Bg=1-319"/>
</dbReference>
<dbReference type="PDB" id="8K2D">
    <property type="method" value="EM"/>
    <property type="resolution" value="3.20 A"/>
    <property type="chains" value="Sg=1-319"/>
</dbReference>
<dbReference type="PDB" id="8K82">
    <property type="method" value="EM"/>
    <property type="resolution" value="3.00 A"/>
    <property type="chains" value="Sg=1-319"/>
</dbReference>
<dbReference type="PDB" id="8P4V">
    <property type="method" value="X-ray"/>
    <property type="resolution" value="3.16 A"/>
    <property type="chains" value="Rb/h=1-319"/>
</dbReference>
<dbReference type="PDB" id="8P9A">
    <property type="method" value="X-ray"/>
    <property type="resolution" value="2.90 A"/>
    <property type="chains" value="Rb/h=1-319"/>
</dbReference>
<dbReference type="PDB" id="8T2X">
    <property type="method" value="EM"/>
    <property type="resolution" value="2.46 A"/>
    <property type="chains" value="Bg=1-319"/>
</dbReference>
<dbReference type="PDB" id="8T2Y">
    <property type="method" value="EM"/>
    <property type="resolution" value="2.20 A"/>
    <property type="chains" value="Bg=1-319"/>
</dbReference>
<dbReference type="PDB" id="8T2Z">
    <property type="method" value="EM"/>
    <property type="resolution" value="2.40 A"/>
    <property type="chains" value="Bg=1-319"/>
</dbReference>
<dbReference type="PDB" id="8T30">
    <property type="method" value="EM"/>
    <property type="resolution" value="2.88 A"/>
    <property type="chains" value="Bg=1-319"/>
</dbReference>
<dbReference type="PDB" id="8T3A">
    <property type="method" value="EM"/>
    <property type="resolution" value="2.86 A"/>
    <property type="chains" value="Bg=1-319"/>
</dbReference>
<dbReference type="PDB" id="8T3B">
    <property type="method" value="EM"/>
    <property type="resolution" value="3.08 A"/>
    <property type="chains" value="Bg=1-319"/>
</dbReference>
<dbReference type="PDB" id="8T3C">
    <property type="method" value="EM"/>
    <property type="resolution" value="3.86 A"/>
    <property type="chains" value="Bg=1-319"/>
</dbReference>
<dbReference type="PDB" id="8T3D">
    <property type="method" value="EM"/>
    <property type="resolution" value="2.95 A"/>
    <property type="chains" value="Bg=1-319"/>
</dbReference>
<dbReference type="PDB" id="8T3E">
    <property type="method" value="EM"/>
    <property type="resolution" value="3.04 A"/>
    <property type="chains" value="Bg=1-319"/>
</dbReference>
<dbReference type="PDB" id="8T3F">
    <property type="method" value="EM"/>
    <property type="resolution" value="3.09 A"/>
    <property type="chains" value="Bg=1-319"/>
</dbReference>
<dbReference type="PDB" id="8UT0">
    <property type="method" value="EM"/>
    <property type="resolution" value="3.22 A"/>
    <property type="chains" value="SO=5-316"/>
</dbReference>
<dbReference type="PDB" id="8UTI">
    <property type="method" value="EM"/>
    <property type="resolution" value="3.13 A"/>
    <property type="chains" value="SO=5-316"/>
</dbReference>
<dbReference type="PDB" id="8XU8">
    <property type="method" value="EM"/>
    <property type="resolution" value="3.40 A"/>
    <property type="chains" value="SO=5-316"/>
</dbReference>
<dbReference type="PDB" id="8YLD">
    <property type="method" value="EM"/>
    <property type="resolution" value="3.90 A"/>
    <property type="chains" value="SO=2-319"/>
</dbReference>
<dbReference type="PDB" id="8YLR">
    <property type="method" value="EM"/>
    <property type="resolution" value="3.90 A"/>
    <property type="chains" value="SO=5-316"/>
</dbReference>
<dbReference type="PDB" id="8Z70">
    <property type="method" value="EM"/>
    <property type="resolution" value="3.20 A"/>
    <property type="chains" value="SO=5-316"/>
</dbReference>
<dbReference type="PDB" id="8Z71">
    <property type="method" value="EM"/>
    <property type="resolution" value="3.60 A"/>
    <property type="chains" value="SO=5-316"/>
</dbReference>
<dbReference type="PDB" id="9F9S">
    <property type="method" value="EM"/>
    <property type="resolution" value="2.90 A"/>
    <property type="chains" value="RG/SG=1-319"/>
</dbReference>
<dbReference type="PDBsum" id="1TRJ"/>
<dbReference type="PDBsum" id="3FRX"/>
<dbReference type="PDBsum" id="3J6X"/>
<dbReference type="PDBsum" id="3J6Y"/>
<dbReference type="PDBsum" id="3J77"/>
<dbReference type="PDBsum" id="3J78"/>
<dbReference type="PDBsum" id="3RFG"/>
<dbReference type="PDBsum" id="3RFH"/>
<dbReference type="PDBsum" id="4U3M"/>
<dbReference type="PDBsum" id="4U3N"/>
<dbReference type="PDBsum" id="4U3U"/>
<dbReference type="PDBsum" id="4U4N"/>
<dbReference type="PDBsum" id="4U4O"/>
<dbReference type="PDBsum" id="4U4Q"/>
<dbReference type="PDBsum" id="4U4R"/>
<dbReference type="PDBsum" id="4U4U"/>
<dbReference type="PDBsum" id="4U4Y"/>
<dbReference type="PDBsum" id="4U4Z"/>
<dbReference type="PDBsum" id="4U50"/>
<dbReference type="PDBsum" id="4U51"/>
<dbReference type="PDBsum" id="4U52"/>
<dbReference type="PDBsum" id="4U53"/>
<dbReference type="PDBsum" id="4U55"/>
<dbReference type="PDBsum" id="4U56"/>
<dbReference type="PDBsum" id="4U6F"/>
<dbReference type="PDBsum" id="4V6I"/>
<dbReference type="PDBsum" id="4V7R"/>
<dbReference type="PDBsum" id="4V88"/>
<dbReference type="PDBsum" id="4V8Y"/>
<dbReference type="PDBsum" id="4V8Z"/>
<dbReference type="PDBsum" id="4V92"/>
<dbReference type="PDBsum" id="5DAT"/>
<dbReference type="PDBsum" id="5DC3"/>
<dbReference type="PDBsum" id="5DGE"/>
<dbReference type="PDBsum" id="5DGF"/>
<dbReference type="PDBsum" id="5DGV"/>
<dbReference type="PDBsum" id="5FCI"/>
<dbReference type="PDBsum" id="5FCJ"/>
<dbReference type="PDBsum" id="5I4L"/>
<dbReference type="PDBsum" id="5JUO"/>
<dbReference type="PDBsum" id="5JUP"/>
<dbReference type="PDBsum" id="5JUS"/>
<dbReference type="PDBsum" id="5JUT"/>
<dbReference type="PDBsum" id="5JUU"/>
<dbReference type="PDBsum" id="5LYB"/>
<dbReference type="PDBsum" id="5M1J"/>
<dbReference type="PDBsum" id="5MC6"/>
<dbReference type="PDBsum" id="5MEI"/>
<dbReference type="PDBsum" id="5NDG"/>
<dbReference type="PDBsum" id="5NDV"/>
<dbReference type="PDBsum" id="5NDW"/>
<dbReference type="PDBsum" id="5OBM"/>
<dbReference type="PDBsum" id="5ON6"/>
<dbReference type="PDBsum" id="5TBW"/>
<dbReference type="PDBsum" id="5TGA"/>
<dbReference type="PDBsum" id="5TGM"/>
<dbReference type="PDBsum" id="6FAI"/>
<dbReference type="PDBsum" id="6GQ1"/>
<dbReference type="PDBsum" id="6GQB"/>
<dbReference type="PDBsum" id="6GQV"/>
<dbReference type="PDBsum" id="6HHQ"/>
<dbReference type="PDBsum" id="6I7O"/>
<dbReference type="PDBsum" id="6Q8Y"/>
<dbReference type="PDBsum" id="6RBE"/>
<dbReference type="PDBsum" id="6S47"/>
<dbReference type="PDBsum" id="6SNT"/>
<dbReference type="PDBsum" id="6SV4"/>
<dbReference type="PDBsum" id="6T4Q"/>
<dbReference type="PDBsum" id="6T7I"/>
<dbReference type="PDBsum" id="6T7T"/>
<dbReference type="PDBsum" id="6T83"/>
<dbReference type="PDBsum" id="6TB3"/>
<dbReference type="PDBsum" id="6TNU"/>
<dbReference type="PDBsum" id="6WDR"/>
<dbReference type="PDBsum" id="6WOO"/>
<dbReference type="PDBsum" id="6XIQ"/>
<dbReference type="PDBsum" id="6XIR"/>
<dbReference type="PDBsum" id="6Z6J"/>
<dbReference type="PDBsum" id="6Z6K"/>
<dbReference type="PDBsum" id="6ZCE"/>
<dbReference type="PDBsum" id="6ZU9"/>
<dbReference type="PDBsum" id="6ZVI"/>
<dbReference type="PDBsum" id="7A1G"/>
<dbReference type="PDBsum" id="7B7D"/>
<dbReference type="PDBsum" id="7MPI"/>
<dbReference type="PDBsum" id="7MPJ"/>
<dbReference type="PDBsum" id="7N8B"/>
<dbReference type="PDBsum" id="7NRC"/>
<dbReference type="PDBsum" id="7NRD"/>
<dbReference type="PDBsum" id="7ZPQ"/>
<dbReference type="PDBsum" id="7ZRS"/>
<dbReference type="PDBsum" id="7ZUW"/>
<dbReference type="PDBsum" id="7ZUX"/>
<dbReference type="PDBsum" id="7ZW0"/>
<dbReference type="PDBsum" id="8BN3"/>
<dbReference type="PDBsum" id="8BQD"/>
<dbReference type="PDBsum" id="8BQX"/>
<dbReference type="PDBsum" id="8CAH"/>
<dbReference type="PDBsum" id="8CAS"/>
<dbReference type="PDBsum" id="8CBJ"/>
<dbReference type="PDBsum" id="8CCS"/>
<dbReference type="PDBsum" id="8CDL"/>
<dbReference type="PDBsum" id="8CDR"/>
<dbReference type="PDBsum" id="8CEH"/>
<dbReference type="PDBsum" id="8CF5"/>
<dbReference type="PDBsum" id="8CG8"/>
<dbReference type="PDBsum" id="8CGN"/>
<dbReference type="PDBsum" id="8CIV"/>
<dbReference type="PDBsum" id="8CKU"/>
<dbReference type="PDBsum" id="8CMJ"/>
<dbReference type="PDBsum" id="8EUB"/>
<dbReference type="PDBsum" id="8EVP"/>
<dbReference type="PDBsum" id="8EVQ"/>
<dbReference type="PDBsum" id="8EVR"/>
<dbReference type="PDBsum" id="8EVS"/>
<dbReference type="PDBsum" id="8EVT"/>
<dbReference type="PDBsum" id="8EWB"/>
<dbReference type="PDBsum" id="8EWC"/>
<dbReference type="PDBsum" id="8K2D"/>
<dbReference type="PDBsum" id="8K82"/>
<dbReference type="PDBsum" id="8P4V"/>
<dbReference type="PDBsum" id="8P9A"/>
<dbReference type="PDBsum" id="8T2X"/>
<dbReference type="PDBsum" id="8T2Y"/>
<dbReference type="PDBsum" id="8T2Z"/>
<dbReference type="PDBsum" id="8T30"/>
<dbReference type="PDBsum" id="8T3A"/>
<dbReference type="PDBsum" id="8T3B"/>
<dbReference type="PDBsum" id="8T3C"/>
<dbReference type="PDBsum" id="8T3D"/>
<dbReference type="PDBsum" id="8T3E"/>
<dbReference type="PDBsum" id="8T3F"/>
<dbReference type="PDBsum" id="8UT0"/>
<dbReference type="PDBsum" id="8UTI"/>
<dbReference type="PDBsum" id="8XU8"/>
<dbReference type="PDBsum" id="8YLD"/>
<dbReference type="PDBsum" id="8YLR"/>
<dbReference type="PDBsum" id="8Z70"/>
<dbReference type="PDBsum" id="8Z71"/>
<dbReference type="PDBsum" id="9F9S"/>
<dbReference type="EMDB" id="EMD-0047"/>
<dbReference type="EMDB" id="EMD-0048"/>
<dbReference type="EMDB" id="EMD-0049"/>
<dbReference type="EMDB" id="EMD-10098"/>
<dbReference type="EMDB" id="EMD-10262"/>
<dbReference type="EMDB" id="EMD-10315"/>
<dbReference type="EMDB" id="EMD-10377"/>
<dbReference type="EMDB" id="EMD-10396"/>
<dbReference type="EMDB" id="EMD-10397"/>
<dbReference type="EMDB" id="EMD-10398"/>
<dbReference type="EMDB" id="EMD-10431"/>
<dbReference type="EMDB" id="EMD-10537"/>
<dbReference type="EMDB" id="EMD-11096"/>
<dbReference type="EMDB" id="EMD-11097"/>
<dbReference type="EMDB" id="EMD-11160"/>
<dbReference type="EMDB" id="EMD-11439"/>
<dbReference type="EMDB" id="EMD-11457"/>
<dbReference type="EMDB" id="EMD-11608"/>
<dbReference type="EMDB" id="EMD-12081"/>
<dbReference type="EMDB" id="EMD-12534"/>
<dbReference type="EMDB" id="EMD-12535"/>
<dbReference type="EMDB" id="EMD-14861"/>
<dbReference type="EMDB" id="EMD-14921"/>
<dbReference type="EMDB" id="EMD-14978"/>
<dbReference type="EMDB" id="EMD-14979"/>
<dbReference type="EMDB" id="EMD-14990"/>
<dbReference type="EMDB" id="EMD-16127"/>
<dbReference type="EMDB" id="EMD-16182"/>
<dbReference type="EMDB" id="EMD-16191"/>
<dbReference type="EMDB" id="EMD-16525"/>
<dbReference type="EMDB" id="EMD-16533"/>
<dbReference type="EMDB" id="EMD-16541"/>
<dbReference type="EMDB" id="EMD-16563"/>
<dbReference type="EMDB" id="EMD-16591"/>
<dbReference type="EMDB" id="EMD-16594"/>
<dbReference type="EMDB" id="EMD-16609"/>
<dbReference type="EMDB" id="EMD-16616"/>
<dbReference type="EMDB" id="EMD-16634"/>
<dbReference type="EMDB" id="EMD-16648"/>
<dbReference type="EMDB" id="EMD-16684"/>
<dbReference type="EMDB" id="EMD-16702"/>
<dbReference type="EMDB" id="EMD-16729"/>
<dbReference type="EMDB" id="EMD-21644"/>
<dbReference type="EMDB" id="EMD-21859"/>
<dbReference type="EMDB" id="EMD-22196"/>
<dbReference type="EMDB" id="EMD-22198"/>
<dbReference type="EMDB" id="EMD-23934"/>
<dbReference type="EMDB" id="EMD-23935"/>
<dbReference type="EMDB" id="EMD-24235"/>
<dbReference type="EMDB" id="EMD-28610"/>
<dbReference type="EMDB" id="EMD-28632"/>
<dbReference type="EMDB" id="EMD-28633"/>
<dbReference type="EMDB" id="EMD-28634"/>
<dbReference type="EMDB" id="EMD-28635"/>
<dbReference type="EMDB" id="EMD-28636"/>
<dbReference type="EMDB" id="EMD-28642"/>
<dbReference type="EMDB" id="EMD-28643"/>
<dbReference type="EMDB" id="EMD-3461"/>
<dbReference type="EMDB" id="EMD-36839"/>
<dbReference type="EMDB" id="EMD-36945"/>
<dbReference type="EMDB" id="EMD-38660"/>
<dbReference type="EMDB" id="EMD-40990"/>
<dbReference type="EMDB" id="EMD-40991"/>
<dbReference type="EMDB" id="EMD-40992"/>
<dbReference type="EMDB" id="EMD-40993"/>
<dbReference type="EMDB" id="EMD-40997"/>
<dbReference type="EMDB" id="EMD-40998"/>
<dbReference type="EMDB" id="EMD-40999"/>
<dbReference type="EMDB" id="EMD-41000"/>
<dbReference type="EMDB" id="EMD-41001"/>
<dbReference type="EMDB" id="EMD-41002"/>
<dbReference type="EMDB" id="EMD-4140"/>
<dbReference type="EMDB" id="EMD-4214"/>
<dbReference type="EMDB" id="EMD-42525"/>
<dbReference type="EMDB" id="EMD-42540"/>
<dbReference type="EMDB" id="EMD-4427"/>
<dbReference type="EMDB" id="EMD-4474"/>
<dbReference type="EMDB" id="EMD-4793"/>
<dbReference type="EMDB" id="EMD-50259"/>
<dbReference type="SMR" id="P38011"/>
<dbReference type="BioGRID" id="35292">
    <property type="interactions" value="1060"/>
</dbReference>
<dbReference type="ComplexPortal" id="CPX-1599">
    <property type="entry name" value="40S cytosolic small ribosomal subunit"/>
</dbReference>
<dbReference type="DIP" id="DIP-6465N"/>
<dbReference type="FunCoup" id="P38011">
    <property type="interactions" value="1737"/>
</dbReference>
<dbReference type="IntAct" id="P38011">
    <property type="interactions" value="201"/>
</dbReference>
<dbReference type="MINT" id="P38011"/>
<dbReference type="STRING" id="4932.YMR116C"/>
<dbReference type="MoonProt" id="P38011"/>
<dbReference type="TCDB" id="8.A.92.1.3">
    <property type="family name" value="the g-protein AlphaBetaGama complex (gpc) family"/>
</dbReference>
<dbReference type="iPTMnet" id="P38011"/>
<dbReference type="PaxDb" id="4932-YMR116C"/>
<dbReference type="PeptideAtlas" id="P38011"/>
<dbReference type="TopDownProteomics" id="P38011"/>
<dbReference type="EnsemblFungi" id="YMR116C_mRNA">
    <property type="protein sequence ID" value="YMR116C"/>
    <property type="gene ID" value="YMR116C"/>
</dbReference>
<dbReference type="GeneID" id="855143"/>
<dbReference type="KEGG" id="sce:YMR116C"/>
<dbReference type="AGR" id="SGD:S000004722"/>
<dbReference type="SGD" id="S000004722">
    <property type="gene designation" value="ASC1"/>
</dbReference>
<dbReference type="VEuPathDB" id="FungiDB:YMR116C"/>
<dbReference type="eggNOG" id="KOG0279">
    <property type="taxonomic scope" value="Eukaryota"/>
</dbReference>
<dbReference type="GeneTree" id="ENSGT00940000154461"/>
<dbReference type="HOGENOM" id="CLU_000288_57_7_1"/>
<dbReference type="InParanoid" id="P38011"/>
<dbReference type="OMA" id="NCKLKIN"/>
<dbReference type="OrthoDB" id="7875889at2759"/>
<dbReference type="BioCyc" id="YEAST:G3O-32811-MONOMER"/>
<dbReference type="BioGRID-ORCS" id="855143">
    <property type="hits" value="5 hits in 10 CRISPR screens"/>
</dbReference>
<dbReference type="EvolutionaryTrace" id="P38011"/>
<dbReference type="PRO" id="PR:P38011"/>
<dbReference type="Proteomes" id="UP000002311">
    <property type="component" value="Chromosome XIII"/>
</dbReference>
<dbReference type="RNAct" id="P38011">
    <property type="molecule type" value="protein"/>
</dbReference>
<dbReference type="GO" id="GO:0005737">
    <property type="term" value="C:cytoplasm"/>
    <property type="evidence" value="ECO:0000314"/>
    <property type="project" value="ComplexPortal"/>
</dbReference>
<dbReference type="GO" id="GO:0005829">
    <property type="term" value="C:cytosol"/>
    <property type="evidence" value="ECO:0000318"/>
    <property type="project" value="GO_Central"/>
</dbReference>
<dbReference type="GO" id="GO:0022627">
    <property type="term" value="C:cytosolic small ribosomal subunit"/>
    <property type="evidence" value="ECO:0000314"/>
    <property type="project" value="SGD"/>
</dbReference>
<dbReference type="GO" id="GO:0005634">
    <property type="term" value="C:nucleus"/>
    <property type="evidence" value="ECO:0000318"/>
    <property type="project" value="GO_Central"/>
</dbReference>
<dbReference type="GO" id="GO:0001965">
    <property type="term" value="F:G-protein alpha-subunit binding"/>
    <property type="evidence" value="ECO:0000353"/>
    <property type="project" value="SGD"/>
</dbReference>
<dbReference type="GO" id="GO:0005092">
    <property type="term" value="F:GDP-dissociation inhibitor activity"/>
    <property type="evidence" value="ECO:0000314"/>
    <property type="project" value="SGD"/>
</dbReference>
<dbReference type="GO" id="GO:0005080">
    <property type="term" value="F:protein kinase C binding"/>
    <property type="evidence" value="ECO:0000318"/>
    <property type="project" value="GO_Central"/>
</dbReference>
<dbReference type="GO" id="GO:0043022">
    <property type="term" value="F:ribosome binding"/>
    <property type="evidence" value="ECO:0000314"/>
    <property type="project" value="SGD"/>
</dbReference>
<dbReference type="GO" id="GO:0045182">
    <property type="term" value="F:translation regulator activity"/>
    <property type="evidence" value="ECO:0007669"/>
    <property type="project" value="InterPro"/>
</dbReference>
<dbReference type="GO" id="GO:0002181">
    <property type="term" value="P:cytoplasmic translation"/>
    <property type="evidence" value="ECO:0000303"/>
    <property type="project" value="ComplexPortal"/>
</dbReference>
<dbReference type="GO" id="GO:0007186">
    <property type="term" value="P:G protein-coupled receptor signaling pathway"/>
    <property type="evidence" value="ECO:0000315"/>
    <property type="project" value="SGD"/>
</dbReference>
<dbReference type="GO" id="GO:1990145">
    <property type="term" value="P:maintenance of translational fidelity"/>
    <property type="evidence" value="ECO:0000315"/>
    <property type="project" value="SGD"/>
</dbReference>
<dbReference type="GO" id="GO:0061157">
    <property type="term" value="P:mRNA destabilization"/>
    <property type="evidence" value="ECO:0000315"/>
    <property type="project" value="SGD"/>
</dbReference>
<dbReference type="GO" id="GO:0010629">
    <property type="term" value="P:negative regulation of gene expression"/>
    <property type="evidence" value="ECO:0000315"/>
    <property type="project" value="SGD"/>
</dbReference>
<dbReference type="GO" id="GO:1902660">
    <property type="term" value="P:negative regulation of glucose mediated signaling pathway"/>
    <property type="evidence" value="ECO:0000315"/>
    <property type="project" value="SGD"/>
</dbReference>
<dbReference type="GO" id="GO:0017148">
    <property type="term" value="P:negative regulation of translation"/>
    <property type="evidence" value="ECO:0000315"/>
    <property type="project" value="SGD"/>
</dbReference>
<dbReference type="GO" id="GO:2001125">
    <property type="term" value="P:negative regulation of translational frameshifting"/>
    <property type="evidence" value="ECO:0000315"/>
    <property type="project" value="SGD"/>
</dbReference>
<dbReference type="GO" id="GO:0070651">
    <property type="term" value="P:nonfunctional rRNA decay"/>
    <property type="evidence" value="ECO:0000315"/>
    <property type="project" value="SGD"/>
</dbReference>
<dbReference type="GO" id="GO:0006521">
    <property type="term" value="P:regulation of amino acid metabolic process"/>
    <property type="evidence" value="ECO:0000315"/>
    <property type="project" value="SGD"/>
</dbReference>
<dbReference type="GO" id="GO:0072344">
    <property type="term" value="P:rescue of stalled ribosome"/>
    <property type="evidence" value="ECO:0000314"/>
    <property type="project" value="UniProtKB"/>
</dbReference>
<dbReference type="GO" id="GO:1990116">
    <property type="term" value="P:ribosome-associated ubiquitin-dependent protein catabolic process"/>
    <property type="evidence" value="ECO:0000315"/>
    <property type="project" value="UniProtKB"/>
</dbReference>
<dbReference type="CDD" id="cd00200">
    <property type="entry name" value="WD40"/>
    <property type="match status" value="1"/>
</dbReference>
<dbReference type="FunFam" id="2.130.10.10:FF:000039">
    <property type="entry name" value="Guanine nucleotide-binding protein subunit beta-like protein"/>
    <property type="match status" value="1"/>
</dbReference>
<dbReference type="Gene3D" id="2.130.10.10">
    <property type="entry name" value="YVTN repeat-like/Quinoprotein amine dehydrogenase"/>
    <property type="match status" value="1"/>
</dbReference>
<dbReference type="InterPro" id="IPR020472">
    <property type="entry name" value="G-protein_beta_WD-40_rep"/>
</dbReference>
<dbReference type="InterPro" id="IPR045223">
    <property type="entry name" value="RACK1-like"/>
</dbReference>
<dbReference type="InterPro" id="IPR015943">
    <property type="entry name" value="WD40/YVTN_repeat-like_dom_sf"/>
</dbReference>
<dbReference type="InterPro" id="IPR019775">
    <property type="entry name" value="WD40_repeat_CS"/>
</dbReference>
<dbReference type="InterPro" id="IPR036322">
    <property type="entry name" value="WD40_repeat_dom_sf"/>
</dbReference>
<dbReference type="InterPro" id="IPR001680">
    <property type="entry name" value="WD40_rpt"/>
</dbReference>
<dbReference type="PANTHER" id="PTHR19868">
    <property type="entry name" value="RECEPTOR FOR ACTIVATED PROTEIN KINASE C RACK1"/>
    <property type="match status" value="1"/>
</dbReference>
<dbReference type="Pfam" id="PF00400">
    <property type="entry name" value="WD40"/>
    <property type="match status" value="7"/>
</dbReference>
<dbReference type="PRINTS" id="PR00320">
    <property type="entry name" value="GPROTEINBRPT"/>
</dbReference>
<dbReference type="SMART" id="SM00320">
    <property type="entry name" value="WD40"/>
    <property type="match status" value="7"/>
</dbReference>
<dbReference type="SUPFAM" id="SSF50978">
    <property type="entry name" value="WD40 repeat-like"/>
    <property type="match status" value="1"/>
</dbReference>
<dbReference type="PROSITE" id="PS00678">
    <property type="entry name" value="WD_REPEATS_1"/>
    <property type="match status" value="3"/>
</dbReference>
<dbReference type="PROSITE" id="PS50082">
    <property type="entry name" value="WD_REPEATS_2"/>
    <property type="match status" value="6"/>
</dbReference>
<dbReference type="PROSITE" id="PS50294">
    <property type="entry name" value="WD_REPEATS_REGION"/>
    <property type="match status" value="1"/>
</dbReference>
<gene>
    <name evidence="10" type="primary">ASC1</name>
    <name type="synonym">CPC2</name>
    <name evidence="14" type="ordered locus">YMR116C</name>
    <name evidence="14" type="ORF">YM9718.15C</name>
</gene>
<feature type="initiator methionine" description="Removed" evidence="9 18">
    <location>
        <position position="1"/>
    </location>
</feature>
<feature type="chain" id="PRO_0000127758" description="Small ribosomal subunit protein RACK1">
    <location>
        <begin position="2"/>
        <end position="319"/>
    </location>
</feature>
<feature type="repeat" description="WD 1">
    <location>
        <begin position="15"/>
        <end position="55"/>
    </location>
</feature>
<feature type="repeat" description="WD 2">
    <location>
        <begin position="63"/>
        <end position="102"/>
    </location>
</feature>
<feature type="repeat" description="WD 3">
    <location>
        <begin position="105"/>
        <end position="145"/>
    </location>
</feature>
<feature type="repeat" description="WD 4">
    <location>
        <begin position="147"/>
        <end position="191"/>
    </location>
</feature>
<feature type="repeat" description="WD 5">
    <location>
        <begin position="194"/>
        <end position="233"/>
    </location>
</feature>
<feature type="repeat" description="WD 6">
    <location>
        <begin position="235"/>
        <end position="275"/>
    </location>
</feature>
<feature type="repeat" description="WD 7">
    <location>
        <begin position="284"/>
        <end position="319"/>
    </location>
</feature>
<feature type="modified residue" description="N-acetylalanine" evidence="9 18">
    <location>
        <position position="2"/>
    </location>
</feature>
<feature type="modified residue" description="Phosphothreonine" evidence="15">
    <location>
        <position position="96"/>
    </location>
</feature>
<feature type="modified residue" description="Phosphothreonine" evidence="16">
    <location>
        <position position="168"/>
    </location>
</feature>
<feature type="cross-link" description="Glycyl lysine isopeptide (Lys-Gly) (interchain with G-Cter in ubiquitin)" evidence="17">
    <location>
        <position position="46"/>
    </location>
</feature>
<feature type="cross-link" description="Glycyl lysine isopeptide (Lys-Gly) (interchain with G-Cter in ubiquitin)" evidence="17">
    <location>
        <position position="53"/>
    </location>
</feature>
<feature type="cross-link" description="Glycyl lysine isopeptide (Lys-Gly) (interchain with G-Cter in ubiquitin)" evidence="17">
    <location>
        <position position="107"/>
    </location>
</feature>
<feature type="cross-link" description="Glycyl lysine isopeptide (Lys-Gly) (interchain with G-Cter in ubiquitin)" evidence="17">
    <location>
        <position position="137"/>
    </location>
</feature>
<feature type="cross-link" description="Glycyl lysine isopeptide (Lys-Gly) (interchain with G-Cter in ubiquitin)" evidence="17">
    <location>
        <position position="161"/>
    </location>
</feature>
<feature type="strand" evidence="19">
    <location>
        <begin position="5"/>
        <end position="13"/>
    </location>
</feature>
<feature type="strand" evidence="19">
    <location>
        <begin position="20"/>
        <end position="25"/>
    </location>
</feature>
<feature type="strand" evidence="19">
    <location>
        <begin position="32"/>
        <end position="37"/>
    </location>
</feature>
<feature type="strand" evidence="19">
    <location>
        <begin position="40"/>
        <end position="50"/>
    </location>
</feature>
<feature type="strand" evidence="19">
    <location>
        <begin position="53"/>
        <end position="62"/>
    </location>
</feature>
<feature type="strand" evidence="19">
    <location>
        <begin position="68"/>
        <end position="73"/>
    </location>
</feature>
<feature type="strand" evidence="19">
    <location>
        <begin position="77"/>
        <end position="84"/>
    </location>
</feature>
<feature type="strand" evidence="19">
    <location>
        <begin position="87"/>
        <end position="93"/>
    </location>
</feature>
<feature type="turn" evidence="19">
    <location>
        <begin position="94"/>
        <end position="97"/>
    </location>
</feature>
<feature type="strand" evidence="19">
    <location>
        <begin position="98"/>
        <end position="104"/>
    </location>
</feature>
<feature type="strand" evidence="19">
    <location>
        <begin position="110"/>
        <end position="115"/>
    </location>
</feature>
<feature type="strand" evidence="22">
    <location>
        <begin position="117"/>
        <end position="119"/>
    </location>
</feature>
<feature type="strand" evidence="19">
    <location>
        <begin position="121"/>
        <end position="126"/>
    </location>
</feature>
<feature type="strand" evidence="19">
    <location>
        <begin position="131"/>
        <end position="135"/>
    </location>
</feature>
<feature type="strand" evidence="21">
    <location>
        <begin position="136"/>
        <end position="138"/>
    </location>
</feature>
<feature type="strand" evidence="19">
    <location>
        <begin position="140"/>
        <end position="144"/>
    </location>
</feature>
<feature type="strand" evidence="19">
    <location>
        <begin position="151"/>
        <end position="156"/>
    </location>
</feature>
<feature type="helix" evidence="21">
    <location>
        <begin position="161"/>
        <end position="163"/>
    </location>
</feature>
<feature type="strand" evidence="19">
    <location>
        <begin position="168"/>
        <end position="173"/>
    </location>
</feature>
<feature type="strand" evidence="19">
    <location>
        <begin position="178"/>
        <end position="182"/>
    </location>
</feature>
<feature type="turn" evidence="19">
    <location>
        <begin position="183"/>
        <end position="186"/>
    </location>
</feature>
<feature type="strand" evidence="19">
    <location>
        <begin position="187"/>
        <end position="192"/>
    </location>
</feature>
<feature type="strand" evidence="19">
    <location>
        <begin position="199"/>
        <end position="204"/>
    </location>
</feature>
<feature type="strand" evidence="19">
    <location>
        <begin position="208"/>
        <end position="215"/>
    </location>
</feature>
<feature type="helix" evidence="20">
    <location>
        <begin position="216"/>
        <end position="218"/>
    </location>
</feature>
<feature type="strand" evidence="19">
    <location>
        <begin position="219"/>
        <end position="224"/>
    </location>
</feature>
<feature type="turn" evidence="19">
    <location>
        <begin position="225"/>
        <end position="228"/>
    </location>
</feature>
<feature type="strand" evidence="19">
    <location>
        <begin position="229"/>
        <end position="235"/>
    </location>
</feature>
<feature type="strand" evidence="19">
    <location>
        <begin position="240"/>
        <end position="245"/>
    </location>
</feature>
<feature type="strand" evidence="19">
    <location>
        <begin position="247"/>
        <end position="256"/>
    </location>
</feature>
<feature type="strand" evidence="19">
    <location>
        <begin position="259"/>
        <end position="264"/>
    </location>
</feature>
<feature type="turn" evidence="19">
    <location>
        <begin position="265"/>
        <end position="268"/>
    </location>
</feature>
<feature type="strand" evidence="19">
    <location>
        <begin position="269"/>
        <end position="274"/>
    </location>
</feature>
<feature type="helix" evidence="19">
    <location>
        <begin position="283"/>
        <end position="285"/>
    </location>
</feature>
<feature type="strand" evidence="19">
    <location>
        <begin position="289"/>
        <end position="294"/>
    </location>
</feature>
<feature type="strand" evidence="19">
    <location>
        <begin position="298"/>
        <end position="305"/>
    </location>
</feature>
<feature type="turn" evidence="23">
    <location>
        <begin position="306"/>
        <end position="308"/>
    </location>
</feature>
<feature type="strand" evidence="19">
    <location>
        <begin position="310"/>
        <end position="317"/>
    </location>
</feature>
<accession>P38011</accession>
<accession>D6VZT9</accession>
<accession>Q6LAA5</accession>
<name>GBLP_YEAST</name>
<organism>
    <name type="scientific">Saccharomyces cerevisiae (strain ATCC 204508 / S288c)</name>
    <name type="common">Baker's yeast</name>
    <dbReference type="NCBI Taxonomy" id="559292"/>
    <lineage>
        <taxon>Eukaryota</taxon>
        <taxon>Fungi</taxon>
        <taxon>Dikarya</taxon>
        <taxon>Ascomycota</taxon>
        <taxon>Saccharomycotina</taxon>
        <taxon>Saccharomycetes</taxon>
        <taxon>Saccharomycetales</taxon>
        <taxon>Saccharomycetaceae</taxon>
        <taxon>Saccharomyces</taxon>
    </lineage>
</organism>
<protein>
    <recommendedName>
        <fullName evidence="11">Small ribosomal subunit protein RACK1</fullName>
    </recommendedName>
    <alternativeName>
        <fullName>Guanine nucleotide-binding protein subunit beta-like protein</fullName>
    </alternativeName>
    <alternativeName>
        <fullName>Receptor for activated C kinase</fullName>
    </alternativeName>
    <alternativeName>
        <fullName>Receptor of activated protein kinase C 1</fullName>
        <shortName>RACK1</shortName>
    </alternativeName>
</protein>
<comment type="function">
    <text evidence="4 7 8 13">Component of the ribosome, a large ribonucleoprotein complex responsible for the synthesis of proteins in the cell. The small ribosomal subunit (SSU) binds messenger RNAs (mRNAs) and translates the encoded message by selecting cognate aminoacyl-transfer RNA (tRNA) molecules. The large subunit (LSU) contains the ribosomal catalytic site termed the peptidyl transferase center (PTC), which catalyzes the formation of peptide bonds, thereby polymerizing the amino acids delivered by tRNAs into a polypeptide chain. The nascent polypeptides leave the ribosome through a tunnel in the LSU and interact with protein factors that function in enzymatic processing, targeting, and the membrane insertion of nascent chains at the exit of the ribosomal tunnel (PubMed:22096102). Located at the head of the 40S ribosomal subunit in the vicinity of the mRNA exit channel, RACK1 serves as a scaffold protein that can recruit other proteins to the ribosome. Involved in induction of the ribosome quality control (RQC) pathway; a pathway that degrades nascent peptide chains during problematic translation (PubMed:28223409, PubMed:30465652). Involved in the negative regulation of translation of a specific subset of proteins (PubMed:15340087).</text>
</comment>
<comment type="subunit">
    <text evidence="2 3 4 5 6">Component of the small ribosomal subunit (SSU). Mature yeast ribosomes consist of a small (40S) and a large (60S) subunit. The 40S small subunit contains 1 molecule of ribosomal RNA (18S rRNA) and 33 different proteins (encoded by 57 genes). The large 60S subunit contains 3 rRNA molecules (25S, 5.8S and 5S rRNA) and 46 different proteins (encoded by 81 genes). RACK1 is located at the head of the SSU in the vicinity of the mRNA exit channel (PubMed:15334071, PubMed:15340087, PubMed:22096102). RACK1 interacts with the mRNA-binding protein SCP16 (PubMed:15012629). RACK1 also exists simultaneously as a homodimer in a cytosolic non-ribosome-bound form (PubMed:21704636).</text>
</comment>
<comment type="subcellular location">
    <subcellularLocation>
        <location evidence="6">Cytoplasm</location>
    </subcellularLocation>
</comment>
<comment type="disruption phenotype">
    <text evidence="7">Defective activation of the ribosome quality control (RQC) pathway.</text>
</comment>
<comment type="miscellaneous">
    <text evidence="1">Present with 333112 molecules/cell in log phase SD medium.</text>
</comment>
<comment type="similarity">
    <text evidence="12">Belongs to the WD repeat G protein beta family. Ribosomal protein RACK1 subfamily.</text>
</comment>
<comment type="sequence caution" evidence="12">
    <conflict type="erroneous gene model prediction">
        <sequence resource="EMBL-CDS" id="CAA89753"/>
    </conflict>
</comment>
<proteinExistence type="evidence at protein level"/>